<organism>
    <name type="scientific">Lophophora williamsii</name>
    <name type="common">Peyote</name>
    <name type="synonym">Echinocactus williamsii</name>
    <dbReference type="NCBI Taxonomy" id="130138"/>
    <lineage>
        <taxon>Eukaryota</taxon>
        <taxon>Viridiplantae</taxon>
        <taxon>Streptophyta</taxon>
        <taxon>Embryophyta</taxon>
        <taxon>Tracheophyta</taxon>
        <taxon>Spermatophyta</taxon>
        <taxon>Magnoliopsida</taxon>
        <taxon>eudicotyledons</taxon>
        <taxon>Gunneridae</taxon>
        <taxon>Pentapetalae</taxon>
        <taxon>Caryophyllales</taxon>
        <taxon>Cactineae</taxon>
        <taxon>Cactaceae</taxon>
        <taxon>Cactoideae</taxon>
        <taxon>Cacteae</taxon>
        <taxon>Lophophora</taxon>
    </lineage>
</organism>
<name>C7631_LOPWI</name>
<sequence length="501" mass="56048">MGYYAIFAVVLPFLWTCFYLLKLNPTSKLTSTIRLPPGPRPLPIIGNLHQLGERPHRTLANLAKVYGPIISLKFGSITTIAVSSADVAKEMFQKHDLALASRKVPAAVRANGHDNFSVAWLPVTPKWRFLRKISAIQLFSTQRLDARQSLRQAKVVELLDYIKARSNAGEPVDIGEAAFTTSLNLLSNTFFSMDLASYSSAASGEFKELVWKIMEEIGKPNLADCFPLVGFISRMSVNRELMGYGNKLNEVFAEIIEKRLSAANSSEGRGNGDVLDTLLRIMEEDDSELSLDDIMHLLMDFFTAGTDTTSSTLEWAMTELLHNPEKMAKAQAELEQVLGKDTVSIQESDIAKLLYLQATVKETLRMHPPTVFLLPRKADSDIDLYGHLVPKNAQVFVNLWAISYDPSTWENPDLFSPERFLDQDIDMKGQDFGFIPFGAGRRICPGLTLAYRMLNLMLGTLIHVFNWKLGDGLSREDLDMTDKFGITIQKAKPLRAIPILK</sequence>
<dbReference type="EC" id="1.14.-.-" evidence="4"/>
<dbReference type="PROSITE" id="PS00086">
    <property type="entry name" value="CYTOCHROME_P450"/>
    <property type="match status" value="1"/>
</dbReference>
<reference key="1">
    <citation type="journal article" date="2024" name="Mol. Plant">
        <title>The biosynthetic pathway of the hallucinogen mescaline and its heterologous reconstruction.</title>
        <authorList>
            <person name="Berman P."/>
            <person name="de Haro L.A."/>
            <person name="Cavaco A.-R."/>
            <person name="Panda S."/>
            <person name="Dong Y."/>
            <person name="Kuzmich N."/>
            <person name="Lichtenstein G."/>
            <person name="Peleg Y."/>
            <person name="Harat H."/>
            <person name="Jozwiak A."/>
            <person name="Cai J."/>
            <person name="Heinig U."/>
            <person name="Meir S."/>
            <person name="Rogachev I."/>
            <person name="Aharoni A."/>
        </authorList>
    </citation>
    <scope>NUCLEOTIDE SEQUENCE [MRNA]</scope>
    <scope>FUNCTION</scope>
    <scope>CATALYTIC ACTIVITY</scope>
    <scope>PATHWAY</scope>
    <scope>TISSUE SPECIFICITY</scope>
    <scope>BIOTECHNOLOGY</scope>
    <source>
        <strain>cv. Rehovot 7</strain>
    </source>
</reference>
<comment type="function">
    <text evidence="4">Cytochrome P450 monooxygenase participating in the biosynthesis of natural products derived from phenylethylamine, including mescaline, a natural hallucinogen potentially used in psychotherapeutic treatments (PubMed:38835170). Catalyzes the hydroxylation of tyramine to dopamine and of 3-methoxytyramine to 3,4-dihydroxy-5-methoxyphenethylamine (PubMed:38835170).</text>
</comment>
<comment type="catalytic activity">
    <reaction evidence="4">
        <text>tyramine + reduced [NADPH--hemoprotein reductase] + O2 = dopamine + oxidized [NADPH--hemoprotein reductase] + H2O + H(+)</text>
        <dbReference type="Rhea" id="RHEA:80963"/>
        <dbReference type="Rhea" id="RHEA-COMP:11964"/>
        <dbReference type="Rhea" id="RHEA-COMP:11965"/>
        <dbReference type="ChEBI" id="CHEBI:15377"/>
        <dbReference type="ChEBI" id="CHEBI:15378"/>
        <dbReference type="ChEBI" id="CHEBI:15379"/>
        <dbReference type="ChEBI" id="CHEBI:57618"/>
        <dbReference type="ChEBI" id="CHEBI:58210"/>
        <dbReference type="ChEBI" id="CHEBI:59905"/>
        <dbReference type="ChEBI" id="CHEBI:327995"/>
    </reaction>
    <physiologicalReaction direction="left-to-right" evidence="4">
        <dbReference type="Rhea" id="RHEA:80964"/>
    </physiologicalReaction>
</comment>
<comment type="catalytic activity">
    <reaction evidence="4">
        <text>3-methoxytyramine + reduced [NADPH--hemoprotein reductase] + O2 = 3,4-dihydroxy-5-methoxyphenethylamine + oxidized [NADPH--hemoprotein reductase] + H2O + H(+)</text>
        <dbReference type="Rhea" id="RHEA:80967"/>
        <dbReference type="Rhea" id="RHEA-COMP:11964"/>
        <dbReference type="Rhea" id="RHEA-COMP:11965"/>
        <dbReference type="ChEBI" id="CHEBI:15377"/>
        <dbReference type="ChEBI" id="CHEBI:15378"/>
        <dbReference type="ChEBI" id="CHEBI:15379"/>
        <dbReference type="ChEBI" id="CHEBI:57618"/>
        <dbReference type="ChEBI" id="CHEBI:58210"/>
        <dbReference type="ChEBI" id="CHEBI:192089"/>
        <dbReference type="ChEBI" id="CHEBI:231763"/>
    </reaction>
    <physiologicalReaction direction="left-to-right" evidence="4">
        <dbReference type="Rhea" id="RHEA:80968"/>
    </physiologicalReaction>
</comment>
<comment type="cofactor">
    <cofactor evidence="1">
        <name>heme</name>
        <dbReference type="ChEBI" id="CHEBI:30413"/>
    </cofactor>
</comment>
<comment type="pathway">
    <text evidence="4">Aromatic compound metabolism.</text>
</comment>
<comment type="pathway">
    <text evidence="4">Alkaloid biosynthesis.</text>
</comment>
<comment type="subcellular location">
    <subcellularLocation>
        <location evidence="2">Membrane</location>
        <topology evidence="2">Single-pass membrane protein</topology>
    </subcellularLocation>
</comment>
<comment type="tissue specificity">
    <text evidence="4">Highly expressed in aerial parts, in both skin and flesh tissues.</text>
</comment>
<comment type="biotechnology">
    <text evidence="4">An heterologous biosynthetic pathway of mescaline is reconstructed in Nicotiana benthamiana plants and yeast cells expressing Lophophora williamsii genes TyDC2, CYP76AD131, OMT1 and OMT11, thus providing a sustainable production of phenylethylamine-derivated natural products.</text>
</comment>
<comment type="similarity">
    <text evidence="6">Belongs to the cytochrome P450 family.</text>
</comment>
<gene>
    <name evidence="5" type="primary">CYP76AD131</name>
</gene>
<keyword id="KW-0017">Alkaloid metabolism</keyword>
<keyword id="KW-0325">Glycoprotein</keyword>
<keyword id="KW-0408">Iron</keyword>
<keyword id="KW-0472">Membrane</keyword>
<keyword id="KW-0479">Metal-binding</keyword>
<keyword id="KW-0560">Oxidoreductase</keyword>
<keyword id="KW-0812">Transmembrane</keyword>
<keyword id="KW-1133">Transmembrane helix</keyword>
<feature type="chain" id="PRO_0000462567" description="Cytochrome P450 monooxygenase 76AD131">
    <location>
        <begin position="1"/>
        <end position="501"/>
    </location>
</feature>
<feature type="transmembrane region" description="Helical" evidence="2">
    <location>
        <begin position="1"/>
        <end position="21"/>
    </location>
</feature>
<feature type="binding site" description="axial binding residue" evidence="1">
    <location>
        <position position="444"/>
    </location>
    <ligand>
        <name>heme</name>
        <dbReference type="ChEBI" id="CHEBI:30413"/>
    </ligand>
    <ligandPart>
        <name>Fe</name>
        <dbReference type="ChEBI" id="CHEBI:18248"/>
    </ligandPart>
</feature>
<feature type="glycosylation site" description="N-linked (GlcNAc...) asparagine" evidence="3">
    <location>
        <position position="115"/>
    </location>
</feature>
<feature type="glycosylation site" description="N-linked (GlcNAc...) asparagine" evidence="3">
    <location>
        <position position="264"/>
    </location>
</feature>
<evidence type="ECO:0000250" key="1">
    <source>
        <dbReference type="UniProtKB" id="Q94IP1"/>
    </source>
</evidence>
<evidence type="ECO:0000255" key="2"/>
<evidence type="ECO:0000255" key="3">
    <source>
        <dbReference type="PROSITE-ProRule" id="PRU00498"/>
    </source>
</evidence>
<evidence type="ECO:0000269" key="4">
    <source>
    </source>
</evidence>
<evidence type="ECO:0000303" key="5">
    <source>
    </source>
</evidence>
<evidence type="ECO:0000305" key="6"/>
<accession>P0DXJ6</accession>
<proteinExistence type="evidence at protein level"/>
<protein>
    <recommendedName>
        <fullName evidence="5">Cytochrome P450 monooxygenase 76AD131</fullName>
        <shortName evidence="5">LwCYP76AD131</shortName>
        <ecNumber evidence="4">1.14.-.-</ecNumber>
    </recommendedName>
</protein>